<name>RND_ECOLI</name>
<sequence>MNYQMITTDDALASLCEAVRAFPAIALDTEFVRTRTYYPQLGLIQLFDGEHLALIDPLGITDWSPLKAILRDPSITKFLHAGSEDLEVFLNVFGELPQPLIDTQILAAFCGRPMSWGFASMVEEYSGVTLDKSESRTDWLARPLTERQCEYAAADVWYLLPITAKLMVETEASGWLPAALDECRLMQMRRQEVVAPEDAWRDITNAWQLRTRQLACLQLLADWRLRKARERDLAVNFVVREEHLWSVARYMPGSLGELDSLGLSGSEIRFHGKTLLALVEKAQTLPEDALPQPMLNLMDMPGYRKAFKAIKSLITDVSETHKISAELLASRRQINQLLNWHWKLKPQNNLPELISGWRGELMAEALHNLLQEYPQ</sequence>
<reference key="1">
    <citation type="journal article" date="1988" name="Nucleic Acids Res.">
        <title>Escherichia coli RNase D: sequencing of the rnd structural gene and purification of the overexpressed protein.</title>
        <authorList>
            <person name="Zhang J."/>
            <person name="Deutscher M.P."/>
        </authorList>
    </citation>
    <scope>NUCLEOTIDE SEQUENCE [GENOMIC DNA]</scope>
    <scope>PROTEIN SEQUENCE OF 1-6</scope>
    <scope>FUNCTION</scope>
</reference>
<reference key="2">
    <citation type="journal article" date="1996" name="DNA Res.">
        <title>A 460-kb DNA sequence of the Escherichia coli K-12 genome corresponding to the 40.1-50.0 min region on the linkage map.</title>
        <authorList>
            <person name="Itoh T."/>
            <person name="Aiba H."/>
            <person name="Baba T."/>
            <person name="Fujita K."/>
            <person name="Hayashi K."/>
            <person name="Inada T."/>
            <person name="Isono K."/>
            <person name="Kasai H."/>
            <person name="Kimura S."/>
            <person name="Kitakawa M."/>
            <person name="Kitagawa M."/>
            <person name="Makino K."/>
            <person name="Miki T."/>
            <person name="Mizobuchi K."/>
            <person name="Mori H."/>
            <person name="Mori T."/>
            <person name="Motomura K."/>
            <person name="Nakade S."/>
            <person name="Nakamura Y."/>
            <person name="Nashimoto H."/>
            <person name="Nishio Y."/>
            <person name="Oshima T."/>
            <person name="Saito N."/>
            <person name="Sampei G."/>
            <person name="Seki Y."/>
            <person name="Sivasundaram S."/>
            <person name="Tagami H."/>
            <person name="Takeda J."/>
            <person name="Takemoto K."/>
            <person name="Wada C."/>
            <person name="Yamamoto Y."/>
            <person name="Horiuchi T."/>
        </authorList>
    </citation>
    <scope>NUCLEOTIDE SEQUENCE [LARGE SCALE GENOMIC DNA]</scope>
    <source>
        <strain>K12 / W3110 / ATCC 27325 / DSM 5911</strain>
    </source>
</reference>
<reference key="3">
    <citation type="journal article" date="1997" name="Science">
        <title>The complete genome sequence of Escherichia coli K-12.</title>
        <authorList>
            <person name="Blattner F.R."/>
            <person name="Plunkett G. III"/>
            <person name="Bloch C.A."/>
            <person name="Perna N.T."/>
            <person name="Burland V."/>
            <person name="Riley M."/>
            <person name="Collado-Vides J."/>
            <person name="Glasner J.D."/>
            <person name="Rode C.K."/>
            <person name="Mayhew G.F."/>
            <person name="Gregor J."/>
            <person name="Davis N.W."/>
            <person name="Kirkpatrick H.A."/>
            <person name="Goeden M.A."/>
            <person name="Rose D.J."/>
            <person name="Mau B."/>
            <person name="Shao Y."/>
        </authorList>
    </citation>
    <scope>NUCLEOTIDE SEQUENCE [LARGE SCALE GENOMIC DNA]</scope>
    <source>
        <strain>K12 / MG1655 / ATCC 47076</strain>
    </source>
</reference>
<reference key="4">
    <citation type="journal article" date="2006" name="Mol. Syst. Biol.">
        <title>Highly accurate genome sequences of Escherichia coli K-12 strains MG1655 and W3110.</title>
        <authorList>
            <person name="Hayashi K."/>
            <person name="Morooka N."/>
            <person name="Yamamoto Y."/>
            <person name="Fujita K."/>
            <person name="Isono K."/>
            <person name="Choi S."/>
            <person name="Ohtsubo E."/>
            <person name="Baba T."/>
            <person name="Wanner B.L."/>
            <person name="Mori H."/>
            <person name="Horiuchi T."/>
        </authorList>
    </citation>
    <scope>NUCLEOTIDE SEQUENCE [LARGE SCALE GENOMIC DNA]</scope>
    <source>
        <strain>K12 / W3110 / ATCC 27325 / DSM 5911</strain>
    </source>
</reference>
<reference key="5">
    <citation type="journal article" date="1994" name="Mol. Gen. Genet.">
        <title>The fadD gene of Escherichia coli K12 is located close to rnd at 39.6 min of the chromosomal map and is a new member of the AMP-binding protein family.</title>
        <authorList>
            <person name="Fulda M."/>
            <person name="Heinz E."/>
            <person name="Wolter F.P."/>
        </authorList>
    </citation>
    <scope>NUCLEOTIDE SEQUENCE [GENOMIC DNA] OF 1-38</scope>
    <source>
        <strain>K12</strain>
    </source>
</reference>
<reference key="6">
    <citation type="journal article" date="1981" name="J. Biol. Chem.">
        <title>Escherichia coli RNase D. Catalytic properties and substrate specificity.</title>
        <authorList>
            <person name="Cudny H."/>
            <person name="Zaniewski R."/>
            <person name="Deutscher M.P."/>
        </authorList>
    </citation>
    <scope>FUNCTION</scope>
    <scope>CATALYTIC ACTIVITY</scope>
    <scope>COFACTOR</scope>
</reference>
<reference key="7">
    <citation type="journal article" date="2005" name="Structure">
        <title>Crystal structure of Escherichia coli RNase D, an exoribonuclease involved in structured RNA processing.</title>
        <authorList>
            <person name="Zuo Y."/>
            <person name="Wang Y."/>
            <person name="Malhotra A."/>
        </authorList>
    </citation>
    <scope>X-RAY CRYSTALLOGRAPHY (1.6 ANGSTROMS)</scope>
</reference>
<comment type="function">
    <text evidence="1 2 3">Exonuclease involved in the 3' processing of various precursor tRNAs. Initiates hydrolysis at the 3'-terminus of an RNA molecule and releases 5'-mononucleotides.</text>
</comment>
<comment type="catalytic activity">
    <reaction evidence="1 3">
        <text>Exonucleolytic cleavage that removes extra residues from the 3'-terminus of tRNA to produce 5'-mononucleotides.</text>
        <dbReference type="EC" id="3.1.13.5"/>
    </reaction>
</comment>
<comment type="cofactor">
    <cofactor evidence="1 3">
        <name>a divalent metal cation</name>
        <dbReference type="ChEBI" id="CHEBI:60240"/>
    </cofactor>
</comment>
<comment type="subcellular location">
    <subcellularLocation>
        <location>Cytoplasm</location>
    </subcellularLocation>
</comment>
<comment type="similarity">
    <text evidence="1">Belongs to the RNase D family.</text>
</comment>
<feature type="chain" id="PRO_0000097368" description="Ribonuclease D">
    <location>
        <begin position="1"/>
        <end position="375"/>
    </location>
</feature>
<feature type="domain" description="3'-5' exonuclease" evidence="1">
    <location>
        <begin position="3"/>
        <end position="169"/>
    </location>
</feature>
<feature type="domain" description="HRDC" evidence="1">
    <location>
        <begin position="210"/>
        <end position="289"/>
    </location>
</feature>
<feature type="strand" evidence="4">
    <location>
        <begin position="4"/>
        <end position="6"/>
    </location>
</feature>
<feature type="helix" evidence="4">
    <location>
        <begin position="9"/>
        <end position="19"/>
    </location>
</feature>
<feature type="strand" evidence="4">
    <location>
        <begin position="22"/>
        <end position="32"/>
    </location>
</feature>
<feature type="strand" evidence="4">
    <location>
        <begin position="40"/>
        <end position="47"/>
    </location>
</feature>
<feature type="strand" evidence="4">
    <location>
        <begin position="52"/>
        <end position="55"/>
    </location>
</feature>
<feature type="helix" evidence="4">
    <location>
        <begin position="57"/>
        <end position="59"/>
    </location>
</feature>
<feature type="helix" evidence="4">
    <location>
        <begin position="64"/>
        <end position="71"/>
    </location>
</feature>
<feature type="strand" evidence="4">
    <location>
        <begin position="75"/>
        <end position="81"/>
    </location>
</feature>
<feature type="helix" evidence="4">
    <location>
        <begin position="83"/>
        <end position="93"/>
    </location>
</feature>
<feature type="strand" evidence="4">
    <location>
        <begin position="98"/>
        <end position="102"/>
    </location>
</feature>
<feature type="helix" evidence="4">
    <location>
        <begin position="103"/>
        <end position="109"/>
    </location>
</feature>
<feature type="helix" evidence="4">
    <location>
        <begin position="118"/>
        <end position="126"/>
    </location>
</feature>
<feature type="turn" evidence="4">
    <location>
        <begin position="133"/>
        <end position="136"/>
    </location>
</feature>
<feature type="strand" evidence="4">
    <location>
        <begin position="141"/>
        <end position="143"/>
    </location>
</feature>
<feature type="helix" evidence="4">
    <location>
        <begin position="146"/>
        <end position="157"/>
    </location>
</feature>
<feature type="helix" evidence="4">
    <location>
        <begin position="159"/>
        <end position="172"/>
    </location>
</feature>
<feature type="helix" evidence="4">
    <location>
        <begin position="176"/>
        <end position="191"/>
    </location>
</feature>
<feature type="helix" evidence="4">
    <location>
        <begin position="196"/>
        <end position="202"/>
    </location>
</feature>
<feature type="helix" evidence="4">
    <location>
        <begin position="206"/>
        <end position="208"/>
    </location>
</feature>
<feature type="helix" evidence="4">
    <location>
        <begin position="211"/>
        <end position="231"/>
    </location>
</feature>
<feature type="helix" evidence="4">
    <location>
        <begin position="235"/>
        <end position="237"/>
    </location>
</feature>
<feature type="helix" evidence="4">
    <location>
        <begin position="241"/>
        <end position="250"/>
    </location>
</feature>
<feature type="helix" evidence="4">
    <location>
        <begin position="255"/>
        <end position="260"/>
    </location>
</feature>
<feature type="helix" evidence="4">
    <location>
        <begin position="265"/>
        <end position="284"/>
    </location>
</feature>
<feature type="helix" evidence="4">
    <location>
        <begin position="287"/>
        <end position="289"/>
    </location>
</feature>
<feature type="helix" evidence="4">
    <location>
        <begin position="297"/>
        <end position="299"/>
    </location>
</feature>
<feature type="helix" evidence="4">
    <location>
        <begin position="303"/>
        <end position="321"/>
    </location>
</feature>
<feature type="helix" evidence="4">
    <location>
        <begin position="325"/>
        <end position="328"/>
    </location>
</feature>
<feature type="helix" evidence="4">
    <location>
        <begin position="331"/>
        <end position="341"/>
    </location>
</feature>
<feature type="helix" evidence="4">
    <location>
        <begin position="352"/>
        <end position="354"/>
    </location>
</feature>
<feature type="helix" evidence="4">
    <location>
        <begin position="356"/>
        <end position="370"/>
    </location>
</feature>
<accession>P09155</accession>
<proteinExistence type="evidence at protein level"/>
<evidence type="ECO:0000255" key="1">
    <source>
        <dbReference type="HAMAP-Rule" id="MF_01899"/>
    </source>
</evidence>
<evidence type="ECO:0000269" key="2">
    <source>
    </source>
</evidence>
<evidence type="ECO:0000269" key="3">
    <source>
    </source>
</evidence>
<evidence type="ECO:0007829" key="4">
    <source>
        <dbReference type="PDB" id="1YT3"/>
    </source>
</evidence>
<keyword id="KW-0002">3D-structure</keyword>
<keyword id="KW-0963">Cytoplasm</keyword>
<keyword id="KW-0903">Direct protein sequencing</keyword>
<keyword id="KW-0269">Exonuclease</keyword>
<keyword id="KW-0378">Hydrolase</keyword>
<keyword id="KW-0540">Nuclease</keyword>
<keyword id="KW-1185">Reference proteome</keyword>
<keyword id="KW-0819">tRNA processing</keyword>
<protein>
    <recommendedName>
        <fullName evidence="1">Ribonuclease D</fullName>
        <shortName evidence="1">RNase D</shortName>
        <ecNumber evidence="1">3.1.13.5</ecNumber>
    </recommendedName>
</protein>
<dbReference type="EC" id="3.1.13.5" evidence="1"/>
<dbReference type="EMBL" id="X07055">
    <property type="protein sequence ID" value="CAA30098.1"/>
    <property type="molecule type" value="Genomic_DNA"/>
</dbReference>
<dbReference type="EMBL" id="U00096">
    <property type="protein sequence ID" value="AAC74874.1"/>
    <property type="molecule type" value="Genomic_DNA"/>
</dbReference>
<dbReference type="EMBL" id="AP009048">
    <property type="protein sequence ID" value="BAA15599.1"/>
    <property type="molecule type" value="Genomic_DNA"/>
</dbReference>
<dbReference type="EMBL" id="X70994">
    <property type="protein sequence ID" value="CAA50322.1"/>
    <property type="molecule type" value="Genomic_DNA"/>
</dbReference>
<dbReference type="PIR" id="S01223">
    <property type="entry name" value="NRECD"/>
</dbReference>
<dbReference type="RefSeq" id="NP_416318.1">
    <property type="nucleotide sequence ID" value="NC_000913.3"/>
</dbReference>
<dbReference type="PDB" id="1YT3">
    <property type="method" value="X-ray"/>
    <property type="resolution" value="1.60 A"/>
    <property type="chains" value="A=1-375"/>
</dbReference>
<dbReference type="PDBsum" id="1YT3"/>
<dbReference type="SMR" id="P09155"/>
<dbReference type="BioGRID" id="4260338">
    <property type="interactions" value="56"/>
</dbReference>
<dbReference type="FunCoup" id="P09155">
    <property type="interactions" value="23"/>
</dbReference>
<dbReference type="IntAct" id="P09155">
    <property type="interactions" value="1"/>
</dbReference>
<dbReference type="STRING" id="511145.b1804"/>
<dbReference type="jPOST" id="P09155"/>
<dbReference type="PaxDb" id="511145-b1804"/>
<dbReference type="DNASU" id="946328"/>
<dbReference type="EnsemblBacteria" id="AAC74874">
    <property type="protein sequence ID" value="AAC74874"/>
    <property type="gene ID" value="b1804"/>
</dbReference>
<dbReference type="GeneID" id="946328"/>
<dbReference type="KEGG" id="ecj:JW1793"/>
<dbReference type="KEGG" id="eco:b1804"/>
<dbReference type="PATRIC" id="fig|511145.12.peg.1880"/>
<dbReference type="EchoBASE" id="EB0851"/>
<dbReference type="eggNOG" id="COG0349">
    <property type="taxonomic scope" value="Bacteria"/>
</dbReference>
<dbReference type="HOGENOM" id="CLU_042387_0_1_6"/>
<dbReference type="InParanoid" id="P09155"/>
<dbReference type="OMA" id="TSGMHKV"/>
<dbReference type="PhylomeDB" id="P09155"/>
<dbReference type="BioCyc" id="EcoCyc:EG10858-MONOMER"/>
<dbReference type="BioCyc" id="MetaCyc:EG10858-MONOMER"/>
<dbReference type="EvolutionaryTrace" id="P09155"/>
<dbReference type="PRO" id="PR:P09155"/>
<dbReference type="Proteomes" id="UP000000625">
    <property type="component" value="Chromosome"/>
</dbReference>
<dbReference type="GO" id="GO:0005737">
    <property type="term" value="C:cytoplasm"/>
    <property type="evidence" value="ECO:0007669"/>
    <property type="project" value="UniProtKB-SubCell"/>
</dbReference>
<dbReference type="GO" id="GO:0000175">
    <property type="term" value="F:3'-5'-RNA exonuclease activity"/>
    <property type="evidence" value="ECO:0000314"/>
    <property type="project" value="EcoCyc"/>
</dbReference>
<dbReference type="GO" id="GO:0003676">
    <property type="term" value="F:nucleic acid binding"/>
    <property type="evidence" value="ECO:0007669"/>
    <property type="project" value="InterPro"/>
</dbReference>
<dbReference type="GO" id="GO:0000166">
    <property type="term" value="F:nucleotide binding"/>
    <property type="evidence" value="ECO:0007669"/>
    <property type="project" value="InterPro"/>
</dbReference>
<dbReference type="GO" id="GO:0033890">
    <property type="term" value="F:ribonuclease D activity"/>
    <property type="evidence" value="ECO:0000314"/>
    <property type="project" value="EcoCyc"/>
</dbReference>
<dbReference type="GO" id="GO:0042780">
    <property type="term" value="P:tRNA 3'-end processing"/>
    <property type="evidence" value="ECO:0000269"/>
    <property type="project" value="EcoCyc"/>
</dbReference>
<dbReference type="CDD" id="cd06142">
    <property type="entry name" value="RNaseD_exo"/>
    <property type="match status" value="1"/>
</dbReference>
<dbReference type="FunFam" id="1.10.150.80:FF:000006">
    <property type="entry name" value="Ribonuclease D"/>
    <property type="match status" value="1"/>
</dbReference>
<dbReference type="FunFam" id="1.10.150.80:FF:000007">
    <property type="entry name" value="Ribonuclease D"/>
    <property type="match status" value="1"/>
</dbReference>
<dbReference type="FunFam" id="3.30.420.10:FF:000060">
    <property type="entry name" value="Ribonuclease D"/>
    <property type="match status" value="1"/>
</dbReference>
<dbReference type="Gene3D" id="1.10.150.80">
    <property type="entry name" value="HRDC domain"/>
    <property type="match status" value="2"/>
</dbReference>
<dbReference type="Gene3D" id="3.30.420.10">
    <property type="entry name" value="Ribonuclease H-like superfamily/Ribonuclease H"/>
    <property type="match status" value="1"/>
</dbReference>
<dbReference type="HAMAP" id="MF_01899">
    <property type="entry name" value="RNase_D"/>
    <property type="match status" value="1"/>
</dbReference>
<dbReference type="InterPro" id="IPR002562">
    <property type="entry name" value="3'-5'_exonuclease_dom"/>
</dbReference>
<dbReference type="InterPro" id="IPR010997">
    <property type="entry name" value="HRDC-like_sf"/>
</dbReference>
<dbReference type="InterPro" id="IPR002121">
    <property type="entry name" value="HRDC_dom"/>
</dbReference>
<dbReference type="InterPro" id="IPR044876">
    <property type="entry name" value="HRDC_dom_sf"/>
</dbReference>
<dbReference type="InterPro" id="IPR006292">
    <property type="entry name" value="RNase_D"/>
</dbReference>
<dbReference type="InterPro" id="IPR051086">
    <property type="entry name" value="RNase_D-like"/>
</dbReference>
<dbReference type="InterPro" id="IPR048579">
    <property type="entry name" value="RNAseD_HRDC_C"/>
</dbReference>
<dbReference type="InterPro" id="IPR012337">
    <property type="entry name" value="RNaseH-like_sf"/>
</dbReference>
<dbReference type="InterPro" id="IPR036397">
    <property type="entry name" value="RNaseH_sf"/>
</dbReference>
<dbReference type="NCBIfam" id="NF008089">
    <property type="entry name" value="PRK10829.1"/>
    <property type="match status" value="1"/>
</dbReference>
<dbReference type="NCBIfam" id="TIGR01388">
    <property type="entry name" value="rnd"/>
    <property type="match status" value="1"/>
</dbReference>
<dbReference type="PANTHER" id="PTHR47649">
    <property type="entry name" value="RIBONUCLEASE D"/>
    <property type="match status" value="1"/>
</dbReference>
<dbReference type="PANTHER" id="PTHR47649:SF1">
    <property type="entry name" value="RIBONUCLEASE D"/>
    <property type="match status" value="1"/>
</dbReference>
<dbReference type="Pfam" id="PF01612">
    <property type="entry name" value="DNA_pol_A_exo1"/>
    <property type="match status" value="1"/>
</dbReference>
<dbReference type="Pfam" id="PF00570">
    <property type="entry name" value="HRDC"/>
    <property type="match status" value="1"/>
</dbReference>
<dbReference type="Pfam" id="PF21293">
    <property type="entry name" value="RNAseD_HRDC_C"/>
    <property type="match status" value="1"/>
</dbReference>
<dbReference type="SMART" id="SM00474">
    <property type="entry name" value="35EXOc"/>
    <property type="match status" value="1"/>
</dbReference>
<dbReference type="SMART" id="SM00341">
    <property type="entry name" value="HRDC"/>
    <property type="match status" value="1"/>
</dbReference>
<dbReference type="SUPFAM" id="SSF47819">
    <property type="entry name" value="HRDC-like"/>
    <property type="match status" value="2"/>
</dbReference>
<dbReference type="SUPFAM" id="SSF53098">
    <property type="entry name" value="Ribonuclease H-like"/>
    <property type="match status" value="1"/>
</dbReference>
<dbReference type="PROSITE" id="PS50967">
    <property type="entry name" value="HRDC"/>
    <property type="match status" value="1"/>
</dbReference>
<organism>
    <name type="scientific">Escherichia coli (strain K12)</name>
    <dbReference type="NCBI Taxonomy" id="83333"/>
    <lineage>
        <taxon>Bacteria</taxon>
        <taxon>Pseudomonadati</taxon>
        <taxon>Pseudomonadota</taxon>
        <taxon>Gammaproteobacteria</taxon>
        <taxon>Enterobacterales</taxon>
        <taxon>Enterobacteriaceae</taxon>
        <taxon>Escherichia</taxon>
    </lineage>
</organism>
<gene>
    <name evidence="1" type="primary">rnd</name>
    <name type="ordered locus">b1804</name>
    <name type="ordered locus">JW1793</name>
</gene>